<dbReference type="EMBL" id="CU928162">
    <property type="protein sequence ID" value="CAR06415.1"/>
    <property type="molecule type" value="Genomic_DNA"/>
</dbReference>
<dbReference type="RefSeq" id="WP_000417058.1">
    <property type="nucleotide sequence ID" value="NC_011745.1"/>
</dbReference>
<dbReference type="SMR" id="B7MP50"/>
<dbReference type="KEGG" id="ecq:ECED1_0196"/>
<dbReference type="HOGENOM" id="CLU_190008_0_0_6"/>
<dbReference type="Proteomes" id="UP000000748">
    <property type="component" value="Chromosome"/>
</dbReference>
<dbReference type="HAMAP" id="MF_01064">
    <property type="entry name" value="UPF0253"/>
    <property type="match status" value="1"/>
</dbReference>
<dbReference type="InterPro" id="IPR009624">
    <property type="entry name" value="UPF0253"/>
</dbReference>
<dbReference type="NCBIfam" id="NF003436">
    <property type="entry name" value="PRK04964.1"/>
    <property type="match status" value="1"/>
</dbReference>
<dbReference type="Pfam" id="PF06786">
    <property type="entry name" value="UPF0253"/>
    <property type="match status" value="1"/>
</dbReference>
<reference key="1">
    <citation type="journal article" date="2009" name="PLoS Genet.">
        <title>Organised genome dynamics in the Escherichia coli species results in highly diverse adaptive paths.</title>
        <authorList>
            <person name="Touchon M."/>
            <person name="Hoede C."/>
            <person name="Tenaillon O."/>
            <person name="Barbe V."/>
            <person name="Baeriswyl S."/>
            <person name="Bidet P."/>
            <person name="Bingen E."/>
            <person name="Bonacorsi S."/>
            <person name="Bouchier C."/>
            <person name="Bouvet O."/>
            <person name="Calteau A."/>
            <person name="Chiapello H."/>
            <person name="Clermont O."/>
            <person name="Cruveiller S."/>
            <person name="Danchin A."/>
            <person name="Diard M."/>
            <person name="Dossat C."/>
            <person name="Karoui M.E."/>
            <person name="Frapy E."/>
            <person name="Garry L."/>
            <person name="Ghigo J.M."/>
            <person name="Gilles A.M."/>
            <person name="Johnson J."/>
            <person name="Le Bouguenec C."/>
            <person name="Lescat M."/>
            <person name="Mangenot S."/>
            <person name="Martinez-Jehanne V."/>
            <person name="Matic I."/>
            <person name="Nassif X."/>
            <person name="Oztas S."/>
            <person name="Petit M.A."/>
            <person name="Pichon C."/>
            <person name="Rouy Z."/>
            <person name="Ruf C.S."/>
            <person name="Schneider D."/>
            <person name="Tourret J."/>
            <person name="Vacherie B."/>
            <person name="Vallenet D."/>
            <person name="Medigue C."/>
            <person name="Rocha E.P.C."/>
            <person name="Denamur E."/>
        </authorList>
    </citation>
    <scope>NUCLEOTIDE SEQUENCE [LARGE SCALE GENOMIC DNA]</scope>
    <source>
        <strain>ED1a</strain>
    </source>
</reference>
<name>YAEP_ECO81</name>
<evidence type="ECO:0000255" key="1">
    <source>
        <dbReference type="HAMAP-Rule" id="MF_01064"/>
    </source>
</evidence>
<sequence length="66" mass="7214">MEKYCELIRKRYAEIASGDLGYVPDALGCVLKVLNEMAADDALSEAVREKAAYAAANLLVSDYVNE</sequence>
<accession>B7MP50</accession>
<organism>
    <name type="scientific">Escherichia coli O81 (strain ED1a)</name>
    <dbReference type="NCBI Taxonomy" id="585397"/>
    <lineage>
        <taxon>Bacteria</taxon>
        <taxon>Pseudomonadati</taxon>
        <taxon>Pseudomonadota</taxon>
        <taxon>Gammaproteobacteria</taxon>
        <taxon>Enterobacterales</taxon>
        <taxon>Enterobacteriaceae</taxon>
        <taxon>Escherichia</taxon>
    </lineage>
</organism>
<protein>
    <recommendedName>
        <fullName evidence="1">UPF0253 protein YaeP</fullName>
    </recommendedName>
</protein>
<feature type="chain" id="PRO_1000149728" description="UPF0253 protein YaeP">
    <location>
        <begin position="1"/>
        <end position="66"/>
    </location>
</feature>
<comment type="similarity">
    <text evidence="1">Belongs to the UPF0253 family.</text>
</comment>
<gene>
    <name evidence="1" type="primary">yaeP</name>
    <name type="ordered locus">ECED1_0196</name>
</gene>
<proteinExistence type="inferred from homology"/>